<accession>P24907</accession>
<comment type="catalytic activity">
    <reaction>
        <text>DNA(n) + a 2'-deoxyribonucleoside 5'-triphosphate = DNA(n+1) + diphosphate</text>
        <dbReference type="Rhea" id="RHEA:22508"/>
        <dbReference type="Rhea" id="RHEA-COMP:17339"/>
        <dbReference type="Rhea" id="RHEA-COMP:17340"/>
        <dbReference type="ChEBI" id="CHEBI:33019"/>
        <dbReference type="ChEBI" id="CHEBI:61560"/>
        <dbReference type="ChEBI" id="CHEBI:173112"/>
        <dbReference type="EC" id="2.7.7.7"/>
    </reaction>
</comment>
<comment type="subcellular location">
    <subcellularLocation>
        <location>Host nucleus</location>
    </subcellularLocation>
</comment>
<comment type="similarity">
    <text evidence="1">Belongs to the DNA polymerase type-B family.</text>
</comment>
<reference key="1">
    <citation type="journal article" date="1990" name="Virology">
        <title>Structural organization of the conserved gene block of Herpesvirus saimiri coding for DNA polymerase, glycoprotein B, and major DNA binding protein.</title>
        <authorList>
            <person name="Albrecht J.-C."/>
            <person name="Fleckenstein B."/>
        </authorList>
    </citation>
    <scope>NUCLEOTIDE SEQUENCE [GENOMIC DNA]</scope>
</reference>
<reference key="2">
    <citation type="journal article" date="1992" name="J. Virol.">
        <title>Primary structure of the herpesvirus saimiri genome.</title>
        <authorList>
            <person name="Albrecht J.-C."/>
            <person name="Nicholas J."/>
            <person name="Biller D."/>
            <person name="Cameron K.R."/>
            <person name="Biesinger B."/>
            <person name="Newman C."/>
            <person name="Wittmann S."/>
            <person name="Craxton M.A."/>
            <person name="Coleman H."/>
            <person name="Fleckenstein B."/>
            <person name="Honess R.W."/>
        </authorList>
    </citation>
    <scope>NUCLEOTIDE SEQUENCE [LARGE SCALE GENOMIC DNA]</scope>
</reference>
<organismHost>
    <name type="scientific">Saimiri sciureus</name>
    <name type="common">Common squirrel monkey</name>
    <dbReference type="NCBI Taxonomy" id="9521"/>
</organismHost>
<keyword id="KW-0235">DNA replication</keyword>
<keyword id="KW-0238">DNA-binding</keyword>
<keyword id="KW-0239">DNA-directed DNA polymerase</keyword>
<keyword id="KW-1048">Host nucleus</keyword>
<keyword id="KW-0548">Nucleotidyltransferase</keyword>
<keyword id="KW-1185">Reference proteome</keyword>
<keyword id="KW-0808">Transferase</keyword>
<keyword id="KW-1194">Viral DNA replication</keyword>
<sequence>MDFYNPYLSKKPTDTKTPKLHTTRQSICRLVPKCFRNPTEKGVVSVSSFALPTYFFKGNENKVYLENGKSMWHLRRPCKNALLEEQSITFHIYDIVETTYSEDRCNDIPFKFQTDIIPNGTVLKLLGRTLEGASVCVNVFGQRNYFYVKVPEGGNITYLIKQALNEKFSPSCAYQTEAVKKKILSRYDPEEHDVFKVTVSSSLSVYKISDSLVSNGCEVFETNVDAIRRFVIDNDFSTFGWYTCKSACPRITNRDSHTDIEFDCGYYDLEFHADRTEWPPYNIMSFDIECIGEKGFPCAKNEGDLIIQISCVFWHAGALDTTRNMLLSLGTCSAVENTEVYEFPSEIDMLHGFFSLIRDFNVEIITGYNISNFDLPYLIDRATQIYNIKLSDYSRVKTGSIFQVHTPKDTGNGFMRSVSKIKISGIIAIDMYIVCKDKLSLSNYKLDTVANHCIGAKKEDVSYKDIMPLFMSGPEGRAKIGLYCVIDSVLVMKLLKFFMIHVEISEIAKLAKIPTRRVLTDGQQIRVFSCLLAAARAENYILPVSNDVNADGFQGATVINPIPGFYNNAVLVVDFASLYPSIIQAHNLCYSTLIPHHALHNYPHLKSSDYETFMLSSGPIHFVKKHIQASLLSRLLTVWLSKRKAIRQKLAECEDLDTKTILDKQQLAIKVTCNAVYGFTGVASGLLPCISIAETVTLQGRTMLEKSKIFIEAMTPDTLQEIVPHIVKHEPDAKFRVIYGDTDSLFVECVGYSVDTVVKFGDFLAAFTSEKLFNAPIKLESEKTFQCLLLLAKKRYIGILSNDKLLMKGVDLVRKTACKFVQNTSSKILNLILKDPEVKAAAQLLSTKDPDYAFREGLPDGFLKVIDILNESHKNLRTGQVPVEELTFSTELSRPISSYKTENLPHLTVYKKIITRHEEPPQVHDRIPYVFVGKTTSCISNMAEDPTYTVQNNIPIAVDLYFDKLIHGVANIIQCLFKDSSKTVSVLYNFVSTPVLFSYELLTDHSVKA</sequence>
<evidence type="ECO:0000305" key="1"/>
<gene>
    <name type="primary">9</name>
    <name type="synonym">KCRF2</name>
</gene>
<protein>
    <recommendedName>
        <fullName>DNA polymerase catalytic subunit</fullName>
        <ecNumber>2.7.7.7</ecNumber>
    </recommendedName>
</protein>
<organism>
    <name type="scientific">Saimiriine herpesvirus 2 (strain 11)</name>
    <name type="common">SaHV-2</name>
    <name type="synonym">Herpesvirus saimiri</name>
    <dbReference type="NCBI Taxonomy" id="10383"/>
    <lineage>
        <taxon>Viruses</taxon>
        <taxon>Duplodnaviria</taxon>
        <taxon>Heunggongvirae</taxon>
        <taxon>Peploviricota</taxon>
        <taxon>Herviviricetes</taxon>
        <taxon>Herpesvirales</taxon>
        <taxon>Orthoherpesviridae</taxon>
        <taxon>Gammaherpesvirinae</taxon>
        <taxon>Rhadinovirus</taxon>
        <taxon>Rhadinovirus saimiriinegamma2</taxon>
        <taxon>Saimiriine herpesvirus 2</taxon>
    </lineage>
</organism>
<name>DPOL_SHV21</name>
<feature type="chain" id="PRO_0000046522" description="DNA polymerase catalytic subunit">
    <location>
        <begin position="1"/>
        <end position="1009"/>
    </location>
</feature>
<dbReference type="EC" id="2.7.7.7"/>
<dbReference type="EMBL" id="X64346">
    <property type="protein sequence ID" value="CAA45632.1"/>
    <property type="molecule type" value="Genomic_DNA"/>
</dbReference>
<dbReference type="EMBL" id="M31122">
    <property type="protein sequence ID" value="AAA46165.1"/>
    <property type="molecule type" value="Genomic_DNA"/>
</dbReference>
<dbReference type="RefSeq" id="NP_040211.1">
    <property type="nucleotide sequence ID" value="NC_001350.1"/>
</dbReference>
<dbReference type="SMR" id="P24907"/>
<dbReference type="KEGG" id="vg:1682519"/>
<dbReference type="Proteomes" id="UP000000587">
    <property type="component" value="Segment"/>
</dbReference>
<dbReference type="GO" id="GO:0042025">
    <property type="term" value="C:host cell nucleus"/>
    <property type="evidence" value="ECO:0007669"/>
    <property type="project" value="UniProtKB-SubCell"/>
</dbReference>
<dbReference type="GO" id="GO:0003677">
    <property type="term" value="F:DNA binding"/>
    <property type="evidence" value="ECO:0007669"/>
    <property type="project" value="UniProtKB-KW"/>
</dbReference>
<dbReference type="GO" id="GO:0003887">
    <property type="term" value="F:DNA-directed DNA polymerase activity"/>
    <property type="evidence" value="ECO:0007669"/>
    <property type="project" value="UniProtKB-KW"/>
</dbReference>
<dbReference type="GO" id="GO:0000166">
    <property type="term" value="F:nucleotide binding"/>
    <property type="evidence" value="ECO:0007669"/>
    <property type="project" value="InterPro"/>
</dbReference>
<dbReference type="GO" id="GO:0006261">
    <property type="term" value="P:DNA-templated DNA replication"/>
    <property type="evidence" value="ECO:0007669"/>
    <property type="project" value="TreeGrafter"/>
</dbReference>
<dbReference type="GO" id="GO:0039693">
    <property type="term" value="P:viral DNA genome replication"/>
    <property type="evidence" value="ECO:0007669"/>
    <property type="project" value="UniProtKB-KW"/>
</dbReference>
<dbReference type="FunFam" id="3.30.420.10:FF:000004">
    <property type="entry name" value="DNA polymerase"/>
    <property type="match status" value="1"/>
</dbReference>
<dbReference type="Gene3D" id="1.10.132.60">
    <property type="entry name" value="DNA polymerase family B, C-terminal domain"/>
    <property type="match status" value="1"/>
</dbReference>
<dbReference type="Gene3D" id="3.30.342.10">
    <property type="entry name" value="DNA Polymerase, chain B, domain 1"/>
    <property type="match status" value="1"/>
</dbReference>
<dbReference type="Gene3D" id="1.10.287.690">
    <property type="entry name" value="Helix hairpin bin"/>
    <property type="match status" value="1"/>
</dbReference>
<dbReference type="Gene3D" id="3.90.1600.10">
    <property type="entry name" value="Palm domain of DNA polymerase"/>
    <property type="match status" value="1"/>
</dbReference>
<dbReference type="Gene3D" id="3.30.420.10">
    <property type="entry name" value="Ribonuclease H-like superfamily/Ribonuclease H"/>
    <property type="match status" value="1"/>
</dbReference>
<dbReference type="InterPro" id="IPR006172">
    <property type="entry name" value="DNA-dir_DNA_pol_B"/>
</dbReference>
<dbReference type="InterPro" id="IPR017964">
    <property type="entry name" value="DNA-dir_DNA_pol_B_CS"/>
</dbReference>
<dbReference type="InterPro" id="IPR006133">
    <property type="entry name" value="DNA-dir_DNA_pol_B_exonuc"/>
</dbReference>
<dbReference type="InterPro" id="IPR006134">
    <property type="entry name" value="DNA-dir_DNA_pol_B_multi_dom"/>
</dbReference>
<dbReference type="InterPro" id="IPR043502">
    <property type="entry name" value="DNA/RNA_pol_sf"/>
</dbReference>
<dbReference type="InterPro" id="IPR042087">
    <property type="entry name" value="DNA_pol_B_thumb"/>
</dbReference>
<dbReference type="InterPro" id="IPR023211">
    <property type="entry name" value="DNA_pol_palm_dom_sf"/>
</dbReference>
<dbReference type="InterPro" id="IPR050240">
    <property type="entry name" value="DNA_pol_type-B"/>
</dbReference>
<dbReference type="InterPro" id="IPR012337">
    <property type="entry name" value="RNaseH-like_sf"/>
</dbReference>
<dbReference type="InterPro" id="IPR036397">
    <property type="entry name" value="RNaseH_sf"/>
</dbReference>
<dbReference type="PANTHER" id="PTHR10322">
    <property type="entry name" value="DNA POLYMERASE CATALYTIC SUBUNIT"/>
    <property type="match status" value="1"/>
</dbReference>
<dbReference type="PANTHER" id="PTHR10322:SF23">
    <property type="entry name" value="DNA POLYMERASE DELTA CATALYTIC SUBUNIT"/>
    <property type="match status" value="1"/>
</dbReference>
<dbReference type="Pfam" id="PF00136">
    <property type="entry name" value="DNA_pol_B"/>
    <property type="match status" value="1"/>
</dbReference>
<dbReference type="Pfam" id="PF03104">
    <property type="entry name" value="DNA_pol_B_exo1"/>
    <property type="match status" value="1"/>
</dbReference>
<dbReference type="PRINTS" id="PR00106">
    <property type="entry name" value="DNAPOLB"/>
</dbReference>
<dbReference type="SMART" id="SM00486">
    <property type="entry name" value="POLBc"/>
    <property type="match status" value="1"/>
</dbReference>
<dbReference type="SUPFAM" id="SSF56672">
    <property type="entry name" value="DNA/RNA polymerases"/>
    <property type="match status" value="1"/>
</dbReference>
<dbReference type="SUPFAM" id="SSF53098">
    <property type="entry name" value="Ribonuclease H-like"/>
    <property type="match status" value="1"/>
</dbReference>
<dbReference type="PROSITE" id="PS00116">
    <property type="entry name" value="DNA_POLYMERASE_B"/>
    <property type="match status" value="1"/>
</dbReference>
<proteinExistence type="inferred from homology"/>